<dbReference type="EC" id="4.1.1.65" evidence="3 4 5"/>
<dbReference type="EMBL" id="AM910989">
    <property type="protein sequence ID" value="CAQ39327.1"/>
    <property type="molecule type" value="Genomic_DNA"/>
</dbReference>
<dbReference type="RefSeq" id="XP_002258555.1">
    <property type="nucleotide sequence ID" value="XM_002258519.1"/>
</dbReference>
<dbReference type="SMR" id="B3L2V1"/>
<dbReference type="FunCoup" id="B3L2V1">
    <property type="interactions" value="143"/>
</dbReference>
<dbReference type="STRING" id="5851.B3L2V1"/>
<dbReference type="EnsemblProtists" id="CAQ39327">
    <property type="protein sequence ID" value="CAQ39327"/>
    <property type="gene ID" value="PKH_072580"/>
</dbReference>
<dbReference type="GeneID" id="7320008"/>
<dbReference type="KEGG" id="pkn:PKNH_0726300"/>
<dbReference type="VEuPathDB" id="PlasmoDB:PKNH_0726300"/>
<dbReference type="HOGENOM" id="CLU_029061_3_1_1"/>
<dbReference type="InParanoid" id="B3L2V1"/>
<dbReference type="OMA" id="KDYHHYH"/>
<dbReference type="OrthoDB" id="4330at2759"/>
<dbReference type="PhylomeDB" id="B3L2V1"/>
<dbReference type="BRENDA" id="4.1.1.65">
    <property type="organism ID" value="4891"/>
</dbReference>
<dbReference type="UniPathway" id="UPA00558">
    <property type="reaction ID" value="UER00616"/>
</dbReference>
<dbReference type="Proteomes" id="UP000031513">
    <property type="component" value="Chromosome 7"/>
</dbReference>
<dbReference type="GO" id="GO:0005789">
    <property type="term" value="C:endoplasmic reticulum membrane"/>
    <property type="evidence" value="ECO:0007669"/>
    <property type="project" value="UniProtKB-SubCell"/>
</dbReference>
<dbReference type="GO" id="GO:0005739">
    <property type="term" value="C:mitochondrion"/>
    <property type="evidence" value="ECO:0007669"/>
    <property type="project" value="InterPro"/>
</dbReference>
<dbReference type="GO" id="GO:0004609">
    <property type="term" value="F:phosphatidylserine decarboxylase activity"/>
    <property type="evidence" value="ECO:0007669"/>
    <property type="project" value="UniProtKB-UniRule"/>
</dbReference>
<dbReference type="GO" id="GO:0006646">
    <property type="term" value="P:phosphatidylethanolamine biosynthetic process"/>
    <property type="evidence" value="ECO:0007669"/>
    <property type="project" value="UniProtKB-UniRule"/>
</dbReference>
<dbReference type="GO" id="GO:0016540">
    <property type="term" value="P:protein autoprocessing"/>
    <property type="evidence" value="ECO:0007669"/>
    <property type="project" value="UniProtKB-UniRule"/>
</dbReference>
<dbReference type="HAMAP" id="MF_03208">
    <property type="entry name" value="PS_decarb_PSD_B_type1_euk"/>
    <property type="match status" value="1"/>
</dbReference>
<dbReference type="InterPro" id="IPR003817">
    <property type="entry name" value="PS_Dcarbxylase"/>
</dbReference>
<dbReference type="InterPro" id="IPR033177">
    <property type="entry name" value="PSD-B"/>
</dbReference>
<dbReference type="InterPro" id="IPR033661">
    <property type="entry name" value="PSD_type1_euk"/>
</dbReference>
<dbReference type="NCBIfam" id="TIGR00163">
    <property type="entry name" value="PS_decarb"/>
    <property type="match status" value="1"/>
</dbReference>
<dbReference type="PANTHER" id="PTHR10067">
    <property type="entry name" value="PHOSPHATIDYLSERINE DECARBOXYLASE"/>
    <property type="match status" value="1"/>
</dbReference>
<dbReference type="PANTHER" id="PTHR10067:SF6">
    <property type="entry name" value="PHOSPHATIDYLSERINE DECARBOXYLASE PROENZYME, MITOCHONDRIAL"/>
    <property type="match status" value="1"/>
</dbReference>
<dbReference type="Pfam" id="PF02666">
    <property type="entry name" value="PS_Dcarbxylase"/>
    <property type="match status" value="1"/>
</dbReference>
<accession>B3L2V1</accession>
<evidence type="ECO:0000250" key="1">
    <source>
        <dbReference type="UniProtKB" id="P0A8K1"/>
    </source>
</evidence>
<evidence type="ECO:0000250" key="2">
    <source>
        <dbReference type="UniProtKB" id="Q9GPP8"/>
    </source>
</evidence>
<evidence type="ECO:0000255" key="3">
    <source>
        <dbReference type="HAMAP-Rule" id="MF_03208"/>
    </source>
</evidence>
<evidence type="ECO:0000269" key="4">
    <source>
    </source>
</evidence>
<evidence type="ECO:0000269" key="5">
    <source>
    </source>
</evidence>
<evidence type="ECO:0000303" key="6">
    <source>
    </source>
</evidence>
<evidence type="ECO:0000305" key="7">
    <source>
    </source>
</evidence>
<evidence type="ECO:0000305" key="8">
    <source>
    </source>
</evidence>
<sequence length="354" mass="41524">MKKNGRDNNFYHLYKNKYLITGVTILSFILMFQYKYHEVLTLHDNSENAVQSSKLFWARLLFGRTRSRITGQILKMEIPNTYRLFIFNFLIKYMHINKEEIKYPIESYKSIGDFFSRYIREETRPIGDVSDYSIVSPCDSELIDYGELTSEYLENIKGVKFNVNTFLGSKFQKKHNDGSTKFFYAIFYLSPKKYHHFHAPFNFKYKIRRHISGELFPVFQGMFKFINNLFNINERVILSGEWKGGNVYYAAISAYNVGNIKIINDEELVTNNLRHQLSYMGGDINTKIFDSYKSVEVGDEIGEFRMGSSIVVIFENKKDFSWNVNQNQTVSVGQRLGGIGEPVKEENRFIKIRS</sequence>
<organism>
    <name type="scientific">Plasmodium knowlesi (strain H)</name>
    <dbReference type="NCBI Taxonomy" id="5851"/>
    <lineage>
        <taxon>Eukaryota</taxon>
        <taxon>Sar</taxon>
        <taxon>Alveolata</taxon>
        <taxon>Apicomplexa</taxon>
        <taxon>Aconoidasida</taxon>
        <taxon>Haemosporida</taxon>
        <taxon>Plasmodiidae</taxon>
        <taxon>Plasmodium</taxon>
        <taxon>Plasmodium (Plasmodium)</taxon>
    </lineage>
</organism>
<keyword id="KW-0210">Decarboxylase</keyword>
<keyword id="KW-0256">Endoplasmic reticulum</keyword>
<keyword id="KW-0444">Lipid biosynthesis</keyword>
<keyword id="KW-0443">Lipid metabolism</keyword>
<keyword id="KW-0456">Lyase</keyword>
<keyword id="KW-0472">Membrane</keyword>
<keyword id="KW-0594">Phospholipid biosynthesis</keyword>
<keyword id="KW-1208">Phospholipid metabolism</keyword>
<keyword id="KW-0670">Pyruvate</keyword>
<keyword id="KW-1185">Reference proteome</keyword>
<keyword id="KW-0812">Transmembrane</keyword>
<keyword id="KW-1133">Transmembrane helix</keyword>
<keyword id="KW-0865">Zymogen</keyword>
<gene>
    <name type="ORF">PKH_072580</name>
</gene>
<name>PSD_PLAKH</name>
<feature type="chain" id="PRO_0000435577" description="Phosphatidylserine decarboxylase proenzyme">
    <location>
        <begin position="1"/>
        <end position="354"/>
    </location>
</feature>
<feature type="chain" id="PRO_0000435578" description="Phosphatidylserine decarboxylase beta chain" evidence="3">
    <location>
        <begin position="1"/>
        <end position="307"/>
    </location>
</feature>
<feature type="chain" id="PRO_0000435579" description="Phosphatidylserine decarboxylase alpha chain" evidence="3">
    <location>
        <begin position="308"/>
        <end position="354"/>
    </location>
</feature>
<feature type="transmembrane region" description="Helical" evidence="3">
    <location>
        <begin position="18"/>
        <end position="36"/>
    </location>
</feature>
<feature type="active site" description="Charge relay system; for autoendoproteolytic cleavage activity" evidence="3 8">
    <location>
        <position position="139"/>
    </location>
</feature>
<feature type="active site" description="Charge relay system; for autoendoproteolytic cleavage activity" evidence="3 8">
    <location>
        <position position="198"/>
    </location>
</feature>
<feature type="active site" description="Charge relay system; for autoendoproteolytic cleavage activity" evidence="3 8">
    <location>
        <position position="308"/>
    </location>
</feature>
<feature type="active site" description="Schiff-base intermediate with substrate; via pyruvic acid; for decarboxylase activity" evidence="1 3">
    <location>
        <position position="308"/>
    </location>
</feature>
<feature type="site" description="Cleavage (non-hydrolytic); by autocatalysis" evidence="3 5">
    <location>
        <begin position="307"/>
        <end position="308"/>
    </location>
</feature>
<feature type="modified residue" description="Pyruvic acid (Ser); by autocatalysis" evidence="3 5">
    <location>
        <position position="308"/>
    </location>
</feature>
<feature type="mutagenesis site" description="Prevents processing of the proenzyme." evidence="5">
    <original>D</original>
    <variation>A</variation>
    <variation>N</variation>
    <location>
        <position position="139"/>
    </location>
</feature>
<feature type="mutagenesis site" description="Not essential for proenzyme processing, but important for decarboxylase activity of the mature enzyme." evidence="5">
    <original>H</original>
    <variation>A</variation>
    <location>
        <position position="195"/>
    </location>
</feature>
<feature type="mutagenesis site" description="Prevents processing of the proenzyme." evidence="5">
    <original>H</original>
    <variation>A</variation>
    <location>
        <position position="198"/>
    </location>
</feature>
<feature type="mutagenesis site" description="Prevents processing of the proenzyme." evidence="5">
    <original>G</original>
    <variation>A</variation>
    <variation>P</variation>
    <location>
        <position position="307"/>
    </location>
</feature>
<feature type="mutagenesis site" description="Prevents processing of the proenzyme." evidence="5">
    <original>S</original>
    <variation>A</variation>
    <variation>T</variation>
    <location>
        <position position="308"/>
    </location>
</feature>
<feature type="mutagenesis site" description="Not essential for either proenzyme processing or decarboxylase activity." evidence="5">
    <original>S</original>
    <variation>A</variation>
    <variation>T</variation>
    <location>
        <position position="309"/>
    </location>
</feature>
<proteinExistence type="evidence at protein level"/>
<reference key="1">
    <citation type="journal article" date="2008" name="Nature">
        <title>The genome of Plasmodium knowlesi strain H, a zoonotic malaria parasite with host range from monkey to man.</title>
        <authorList>
            <person name="Pain A."/>
            <person name="Boehme U."/>
            <person name="Berry A.E."/>
            <person name="Mungall K."/>
            <person name="Finn R."/>
            <person name="Jackson A.P."/>
            <person name="Mourier T."/>
            <person name="Mistry J."/>
            <person name="Pasini E.M."/>
            <person name="Aslett M."/>
            <person name="Balasubrammaniam S."/>
            <person name="Borgwardt K."/>
            <person name="Brooks K."/>
            <person name="Carret C."/>
            <person name="Carver T.J."/>
            <person name="Cherevach I."/>
            <person name="Chillingworth T."/>
            <person name="Clarke T.G."/>
            <person name="Galinski M.R."/>
            <person name="Hall N."/>
            <person name="Harper D."/>
            <person name="Harris D."/>
            <person name="Hauser H."/>
            <person name="Ivens A."/>
            <person name="Janssen C.S."/>
            <person name="Keane T."/>
            <person name="Larke N."/>
            <person name="Lapp S."/>
            <person name="Marti M."/>
            <person name="Moule S."/>
            <person name="Meyer I.M."/>
            <person name="Ormond D."/>
            <person name="Peters N."/>
            <person name="Sanders M."/>
            <person name="Sanders S."/>
            <person name="Sergeant T.J."/>
            <person name="Simmonds M."/>
            <person name="Smith F."/>
            <person name="Squares R."/>
            <person name="Thurston S."/>
            <person name="Tivey A.R."/>
            <person name="Walker D."/>
            <person name="White B."/>
            <person name="Zuiderwijk E."/>
            <person name="Churcher C."/>
            <person name="Quail M.A."/>
            <person name="Cowman A.F."/>
            <person name="Turner C.M.R."/>
            <person name="Rajandream M.A."/>
            <person name="Kocken C.H.M."/>
            <person name="Thomas A.W."/>
            <person name="Newbold C.I."/>
            <person name="Barrell B.G."/>
            <person name="Berriman M."/>
        </authorList>
    </citation>
    <scope>NUCLEOTIDE SEQUENCE [LARGE SCALE GENOMIC DNA]</scope>
    <source>
        <strain>H</strain>
    </source>
</reference>
<reference key="2">
    <citation type="journal article" date="2012" name="J. Biol. Chem.">
        <title>Identification of gene encoding Plasmodium knowlesi phosphatidylserine decarboxylase by genetic complementation in yeast and characterization of in vitro maturation of encoded enzyme.</title>
        <authorList>
            <person name="Choi J.Y."/>
            <person name="Augagneur Y."/>
            <person name="Ben Mamoun C."/>
            <person name="Voelker D.R."/>
        </authorList>
    </citation>
    <scope>FUNCTION</scope>
    <scope>CATALYTIC ACTIVITY</scope>
    <scope>SUBCELLULAR LOCATION</scope>
</reference>
<reference key="3">
    <citation type="journal article" date="2015" name="J. Biol. Chem.">
        <title>From protease to decarboxylase: the molecular metamorphosis of phosphatidylserine decarboxylase.</title>
        <authorList>
            <person name="Choi J.Y."/>
            <person name="Duraisingh M.T."/>
            <person name="Marti M."/>
            <person name="Ben Mamoun C."/>
            <person name="Voelker D.R."/>
        </authorList>
    </citation>
    <scope>ACTIVE SITE</scope>
    <scope>CATALYTIC ACTIVITY</scope>
    <scope>CLEAVAGE SITE</scope>
    <scope>COFACTOR</scope>
    <scope>PYRUVATE FORMATION AT SER-308</scope>
    <scope>ACTIVITY REGULATION</scope>
    <scope>MUTAGENESIS OF ASP-139; HIS-195; HIS-198; GLY-307; SER-308 AND SER-309</scope>
</reference>
<protein>
    <recommendedName>
        <fullName evidence="3 6">Phosphatidylserine decarboxylase proenzyme</fullName>
        <ecNumber evidence="3 4 5">4.1.1.65</ecNumber>
    </recommendedName>
    <component>
        <recommendedName>
            <fullName evidence="3 8">Phosphatidylserine decarboxylase beta chain</fullName>
        </recommendedName>
    </component>
    <component>
        <recommendedName>
            <fullName evidence="3 8">Phosphatidylserine decarboxylase alpha chain</fullName>
        </recommendedName>
    </component>
</protein>
<comment type="function">
    <text evidence="3 4">Catalyzes the formation of phosphatidylethanolamine (PtdEtn) from phosphatidylserine (PtdSer). Plays a central role in phospholipid metabolism and in the interorganelle trafficking of phosphatidylserine.</text>
</comment>
<comment type="catalytic activity">
    <reaction evidence="3 4 5">
        <text>a 1,2-diacyl-sn-glycero-3-phospho-L-serine + H(+) = a 1,2-diacyl-sn-glycero-3-phosphoethanolamine + CO2</text>
        <dbReference type="Rhea" id="RHEA:20828"/>
        <dbReference type="ChEBI" id="CHEBI:15378"/>
        <dbReference type="ChEBI" id="CHEBI:16526"/>
        <dbReference type="ChEBI" id="CHEBI:57262"/>
        <dbReference type="ChEBI" id="CHEBI:64612"/>
        <dbReference type="EC" id="4.1.1.65"/>
    </reaction>
</comment>
<comment type="cofactor">
    <cofactor evidence="3 5">
        <name>pyruvate</name>
        <dbReference type="ChEBI" id="CHEBI:15361"/>
    </cofactor>
    <text evidence="3 5">Binds 1 pyruvoyl group covalently per subunit.</text>
</comment>
<comment type="activity regulation">
    <text evidence="5">Protease activity is inhibited by PMSF.</text>
</comment>
<comment type="pathway">
    <text evidence="3 7">Phospholipid metabolism; phosphatidylethanolamine biosynthesis; phosphatidylethanolamine from CDP-diacylglycerol: step 2/2.</text>
</comment>
<comment type="subunit">
    <text evidence="1 3">Heterodimer of a large membrane-associated beta subunit and a small pyruvoyl-containing alpha subunit.</text>
</comment>
<comment type="subcellular location">
    <subcellularLocation>
        <location evidence="4">Membrane</location>
    </subcellularLocation>
    <subcellularLocation>
        <location evidence="2 3">Endoplasmic reticulum membrane</location>
        <topology evidence="3">Single-pass membrane protein</topology>
    </subcellularLocation>
    <text evidence="3 4">Equally found in the membrane-bound as well as in the soluble fraction.</text>
</comment>
<comment type="PTM">
    <text evidence="3 8">Is synthesized initially as an inactive proenzyme. Formation of the active enzyme involves a self-maturation process in which the active site pyruvoyl group is generated from an internal serine residue via an autocatalytic post-translational modification. Two non-identical subunits are generated from the proenzyme in this reaction, and the pyruvate is formed at the N-terminus of the alpha chain, which is derived from the carboxyl end of the proenzyme. The autoendoproteolytic cleavage occurs by a canonical serine protease mechanism, in which the side chain hydroxyl group of the serine supplies its oxygen atom to form the C-terminus of the beta chain, while the remainder of the serine residue undergoes an oxidative deamination to produce ammonia and the pyruvoyl prosthetic group on the alpha chain. During this reaction, the Ser that is part of the protease active site of the proenzyme becomes the pyruvoyl prosthetic group, which constitutes an essential element of the active site of the mature decarboxylase.</text>
</comment>
<comment type="similarity">
    <text evidence="3">Belongs to the phosphatidylserine decarboxylase family. PSD-B subfamily. Eukaryotic type I sub-subfamily.</text>
</comment>